<reference key="1">
    <citation type="journal article" date="2006" name="Nature">
        <title>Early evolution of the venom system in lizards and snakes.</title>
        <authorList>
            <person name="Fry B.G."/>
            <person name="Vidal N."/>
            <person name="Norman J.A."/>
            <person name="Vonk F.J."/>
            <person name="Scheib H."/>
            <person name="Ramjan S.F.R."/>
            <person name="Kuruppu S."/>
            <person name="Fung K."/>
            <person name="Blair Hedges S."/>
            <person name="Richardson M.K."/>
            <person name="Hodgson W.C."/>
            <person name="Ignjatovic V."/>
            <person name="Summerhayes R."/>
            <person name="Kochva E."/>
        </authorList>
    </citation>
    <scope>NUCLEOTIDE SEQUENCE [LARGE SCALE MRNA]</scope>
    <source>
        <tissue>Venom gland</tissue>
    </source>
</reference>
<keyword id="KW-0108">Calcium channel impairing toxin</keyword>
<keyword id="KW-1015">Disulfide bond</keyword>
<keyword id="KW-0872">Ion channel impairing toxin</keyword>
<keyword id="KW-0528">Neurotoxin</keyword>
<keyword id="KW-0632">Potassium channel impairing toxin</keyword>
<keyword id="KW-0964">Secreted</keyword>
<keyword id="KW-0732">Signal</keyword>
<keyword id="KW-0800">Toxin</keyword>
<evidence type="ECO:0000250" key="1"/>
<evidence type="ECO:0000255" key="2"/>
<evidence type="ECO:0000305" key="3"/>
<feature type="signal peptide" evidence="2">
    <location>
        <begin position="1"/>
        <end position="22"/>
    </location>
</feature>
<feature type="chain" id="PRO_0000380653" description="Cysteine-rich venom protein VAR2">
    <location>
        <begin position="23"/>
        <end position="105" status="greater than"/>
    </location>
</feature>
<feature type="non-terminal residue">
    <location>
        <position position="105"/>
    </location>
</feature>
<protein>
    <recommendedName>
        <fullName>Cysteine-rich venom protein VAR2</fullName>
        <shortName>CRVP</shortName>
    </recommendedName>
    <alternativeName>
        <fullName>Cysteine-rich secretory protein VAR2</fullName>
        <shortName>CRISP-VAR2</shortName>
    </alternativeName>
</protein>
<organism>
    <name type="scientific">Varanus acanthurus</name>
    <name type="common">Ridge-tailed monitor</name>
    <dbReference type="NCBI Taxonomy" id="62035"/>
    <lineage>
        <taxon>Eukaryota</taxon>
        <taxon>Metazoa</taxon>
        <taxon>Chordata</taxon>
        <taxon>Craniata</taxon>
        <taxon>Vertebrata</taxon>
        <taxon>Euteleostomi</taxon>
        <taxon>Lepidosauria</taxon>
        <taxon>Squamata</taxon>
        <taxon>Bifurcata</taxon>
        <taxon>Unidentata</taxon>
        <taxon>Episquamata</taxon>
        <taxon>Toxicofera</taxon>
        <taxon>Anguimorpha</taxon>
        <taxon>Paleoanguimorpha</taxon>
        <taxon>Varanoidea</taxon>
        <taxon>Varanidae</taxon>
        <taxon>Varanus</taxon>
    </lineage>
</organism>
<name>CRVP2_VARAC</name>
<accession>Q2XXR3</accession>
<proteinExistence type="evidence at transcript level"/>
<comment type="function">
    <text evidence="1">Blocks ryanodine receptors, and potassium channels.</text>
</comment>
<comment type="subcellular location">
    <subcellularLocation>
        <location evidence="1">Secreted</location>
    </subcellularLocation>
</comment>
<comment type="tissue specificity">
    <text>Expressed by the venom gland.</text>
</comment>
<comment type="PTM">
    <text evidence="1">Contains 8 disulfide bonds.</text>
</comment>
<comment type="similarity">
    <text evidence="3">Belongs to the CRISP family.</text>
</comment>
<dbReference type="EMBL" id="DQ139882">
    <property type="protein sequence ID" value="AAZ75588.1"/>
    <property type="molecule type" value="mRNA"/>
</dbReference>
<dbReference type="SMR" id="Q2XXR3"/>
<dbReference type="GO" id="GO:0005576">
    <property type="term" value="C:extracellular region"/>
    <property type="evidence" value="ECO:0007669"/>
    <property type="project" value="UniProtKB-SubCell"/>
</dbReference>
<dbReference type="GO" id="GO:0005246">
    <property type="term" value="F:calcium channel regulator activity"/>
    <property type="evidence" value="ECO:0007669"/>
    <property type="project" value="UniProtKB-KW"/>
</dbReference>
<dbReference type="GO" id="GO:0015459">
    <property type="term" value="F:potassium channel regulator activity"/>
    <property type="evidence" value="ECO:0007669"/>
    <property type="project" value="UniProtKB-KW"/>
</dbReference>
<dbReference type="GO" id="GO:0090729">
    <property type="term" value="F:toxin activity"/>
    <property type="evidence" value="ECO:0007669"/>
    <property type="project" value="UniProtKB-KW"/>
</dbReference>
<dbReference type="Gene3D" id="3.40.33.10">
    <property type="entry name" value="CAP"/>
    <property type="match status" value="1"/>
</dbReference>
<dbReference type="InterPro" id="IPR035940">
    <property type="entry name" value="CAP_sf"/>
</dbReference>
<dbReference type="SUPFAM" id="SSF55797">
    <property type="entry name" value="PR-1-like"/>
    <property type="match status" value="1"/>
</dbReference>
<sequence length="105" mass="11957">MILLKLYLTLAAILCQSRGTTSLDLDDLMTTNPEIQNEIINKHNDLRRTVDPPAKNMLKMSWGQHHCRECQTCSTEMQPKMSTHPVSGRKIGWVWVCGGKLLHVK</sequence>